<comment type="function">
    <text evidence="1">Involved in the biosynthesis of branched-chain amino acids (BCAA). Catalyzes an alkyl-migration followed by a ketol-acid reduction of (S)-2-acetolactate (S2AL) to yield (R)-2,3-dihydroxy-isovalerate. In the isomerase reaction, S2AL is rearranged via a Mg-dependent methyl migration to produce 3-hydroxy-3-methyl-2-ketobutyrate (HMKB). In the reductase reaction, this 2-ketoacid undergoes a metal-dependent reduction by NADPH to yield (R)-2,3-dihydroxy-isovalerate.</text>
</comment>
<comment type="catalytic activity">
    <reaction evidence="1">
        <text>(2R)-2,3-dihydroxy-3-methylbutanoate + NADP(+) = (2S)-2-acetolactate + NADPH + H(+)</text>
        <dbReference type="Rhea" id="RHEA:22068"/>
        <dbReference type="ChEBI" id="CHEBI:15378"/>
        <dbReference type="ChEBI" id="CHEBI:49072"/>
        <dbReference type="ChEBI" id="CHEBI:57783"/>
        <dbReference type="ChEBI" id="CHEBI:58349"/>
        <dbReference type="ChEBI" id="CHEBI:58476"/>
        <dbReference type="EC" id="1.1.1.86"/>
    </reaction>
</comment>
<comment type="catalytic activity">
    <reaction evidence="1">
        <text>(2R,3R)-2,3-dihydroxy-3-methylpentanoate + NADP(+) = (S)-2-ethyl-2-hydroxy-3-oxobutanoate + NADPH + H(+)</text>
        <dbReference type="Rhea" id="RHEA:13493"/>
        <dbReference type="ChEBI" id="CHEBI:15378"/>
        <dbReference type="ChEBI" id="CHEBI:49256"/>
        <dbReference type="ChEBI" id="CHEBI:49258"/>
        <dbReference type="ChEBI" id="CHEBI:57783"/>
        <dbReference type="ChEBI" id="CHEBI:58349"/>
        <dbReference type="EC" id="1.1.1.86"/>
    </reaction>
</comment>
<comment type="cofactor">
    <cofactor evidence="1">
        <name>Mg(2+)</name>
        <dbReference type="ChEBI" id="CHEBI:18420"/>
    </cofactor>
    <text evidence="1">Binds 2 magnesium ions per subunit.</text>
</comment>
<comment type="pathway">
    <text evidence="1">Amino-acid biosynthesis; L-isoleucine biosynthesis; L-isoleucine from 2-oxobutanoate: step 2/4.</text>
</comment>
<comment type="pathway">
    <text evidence="1">Amino-acid biosynthesis; L-valine biosynthesis; L-valine from pyruvate: step 2/4.</text>
</comment>
<comment type="similarity">
    <text evidence="1">Belongs to the ketol-acid reductoisomerase family.</text>
</comment>
<sequence>MNAYYEQDADLKYLQGKNIAVLGFGSQGHAHALNLKESGLNVCVGLRPDSSSCEKARENGLEVNTIADAVAWADIVMVLLPDQYQKSIYESEIKPNLKEGNTLAFAHGFNIHYNQIVPPGTVNVIMIAPKSPGHLVRRTYTQGNGVPCLIAVHQDYTGEARQQALAWAKGLGGTKAGVIETTFKNETETDLFGEQAVLCGGSAELIKAGFETLVEAGYPEELAYFECMHELKLIVDLYYEGGLSRMNYSVSDTAEYGGMTRGPRVITSDVKAEMKKILEEVQDGRFAKEFIDECNAGYPNMKKLRESNADHPIEKVGAKLRDMMSWLLKK</sequence>
<dbReference type="EC" id="1.1.1.86" evidence="1"/>
<dbReference type="EMBL" id="CP001101">
    <property type="protein sequence ID" value="ACE04637.1"/>
    <property type="molecule type" value="Genomic_DNA"/>
</dbReference>
<dbReference type="SMR" id="B3EKV1"/>
<dbReference type="STRING" id="331678.Cphamn1_1719"/>
<dbReference type="KEGG" id="cpb:Cphamn1_1719"/>
<dbReference type="eggNOG" id="COG0059">
    <property type="taxonomic scope" value="Bacteria"/>
</dbReference>
<dbReference type="HOGENOM" id="CLU_033821_0_1_10"/>
<dbReference type="OrthoDB" id="9804088at2"/>
<dbReference type="UniPathway" id="UPA00047">
    <property type="reaction ID" value="UER00056"/>
</dbReference>
<dbReference type="UniPathway" id="UPA00049">
    <property type="reaction ID" value="UER00060"/>
</dbReference>
<dbReference type="GO" id="GO:0005829">
    <property type="term" value="C:cytosol"/>
    <property type="evidence" value="ECO:0007669"/>
    <property type="project" value="TreeGrafter"/>
</dbReference>
<dbReference type="GO" id="GO:0004455">
    <property type="term" value="F:ketol-acid reductoisomerase activity"/>
    <property type="evidence" value="ECO:0007669"/>
    <property type="project" value="UniProtKB-UniRule"/>
</dbReference>
<dbReference type="GO" id="GO:0000287">
    <property type="term" value="F:magnesium ion binding"/>
    <property type="evidence" value="ECO:0007669"/>
    <property type="project" value="UniProtKB-UniRule"/>
</dbReference>
<dbReference type="GO" id="GO:0050661">
    <property type="term" value="F:NADP binding"/>
    <property type="evidence" value="ECO:0007669"/>
    <property type="project" value="InterPro"/>
</dbReference>
<dbReference type="GO" id="GO:0009097">
    <property type="term" value="P:isoleucine biosynthetic process"/>
    <property type="evidence" value="ECO:0007669"/>
    <property type="project" value="UniProtKB-UniRule"/>
</dbReference>
<dbReference type="GO" id="GO:0009099">
    <property type="term" value="P:L-valine biosynthetic process"/>
    <property type="evidence" value="ECO:0007669"/>
    <property type="project" value="UniProtKB-UniRule"/>
</dbReference>
<dbReference type="FunFam" id="3.40.50.720:FF:000023">
    <property type="entry name" value="Ketol-acid reductoisomerase (NADP(+))"/>
    <property type="match status" value="1"/>
</dbReference>
<dbReference type="Gene3D" id="6.10.240.10">
    <property type="match status" value="1"/>
</dbReference>
<dbReference type="Gene3D" id="3.40.50.720">
    <property type="entry name" value="NAD(P)-binding Rossmann-like Domain"/>
    <property type="match status" value="1"/>
</dbReference>
<dbReference type="HAMAP" id="MF_00435">
    <property type="entry name" value="IlvC"/>
    <property type="match status" value="1"/>
</dbReference>
<dbReference type="InterPro" id="IPR008927">
    <property type="entry name" value="6-PGluconate_DH-like_C_sf"/>
</dbReference>
<dbReference type="InterPro" id="IPR013023">
    <property type="entry name" value="KARI"/>
</dbReference>
<dbReference type="InterPro" id="IPR000506">
    <property type="entry name" value="KARI_C"/>
</dbReference>
<dbReference type="InterPro" id="IPR013116">
    <property type="entry name" value="KARI_N"/>
</dbReference>
<dbReference type="InterPro" id="IPR014359">
    <property type="entry name" value="KARI_prok"/>
</dbReference>
<dbReference type="InterPro" id="IPR036291">
    <property type="entry name" value="NAD(P)-bd_dom_sf"/>
</dbReference>
<dbReference type="NCBIfam" id="TIGR00465">
    <property type="entry name" value="ilvC"/>
    <property type="match status" value="1"/>
</dbReference>
<dbReference type="NCBIfam" id="NF004017">
    <property type="entry name" value="PRK05479.1"/>
    <property type="match status" value="1"/>
</dbReference>
<dbReference type="NCBIfam" id="NF009940">
    <property type="entry name" value="PRK13403.1"/>
    <property type="match status" value="1"/>
</dbReference>
<dbReference type="PANTHER" id="PTHR21371">
    <property type="entry name" value="KETOL-ACID REDUCTOISOMERASE, MITOCHONDRIAL"/>
    <property type="match status" value="1"/>
</dbReference>
<dbReference type="PANTHER" id="PTHR21371:SF1">
    <property type="entry name" value="KETOL-ACID REDUCTOISOMERASE, MITOCHONDRIAL"/>
    <property type="match status" value="1"/>
</dbReference>
<dbReference type="Pfam" id="PF01450">
    <property type="entry name" value="KARI_C"/>
    <property type="match status" value="1"/>
</dbReference>
<dbReference type="Pfam" id="PF07991">
    <property type="entry name" value="KARI_N"/>
    <property type="match status" value="1"/>
</dbReference>
<dbReference type="PIRSF" id="PIRSF000116">
    <property type="entry name" value="IlvC_gammaproteo"/>
    <property type="match status" value="1"/>
</dbReference>
<dbReference type="SUPFAM" id="SSF48179">
    <property type="entry name" value="6-phosphogluconate dehydrogenase C-terminal domain-like"/>
    <property type="match status" value="1"/>
</dbReference>
<dbReference type="SUPFAM" id="SSF51735">
    <property type="entry name" value="NAD(P)-binding Rossmann-fold domains"/>
    <property type="match status" value="1"/>
</dbReference>
<dbReference type="PROSITE" id="PS51851">
    <property type="entry name" value="KARI_C"/>
    <property type="match status" value="1"/>
</dbReference>
<dbReference type="PROSITE" id="PS51850">
    <property type="entry name" value="KARI_N"/>
    <property type="match status" value="1"/>
</dbReference>
<proteinExistence type="inferred from homology"/>
<gene>
    <name evidence="1" type="primary">ilvC</name>
    <name type="ordered locus">Cphamn1_1719</name>
</gene>
<protein>
    <recommendedName>
        <fullName evidence="1">Ketol-acid reductoisomerase (NADP(+))</fullName>
        <shortName evidence="1">KARI</shortName>
        <ecNumber evidence="1">1.1.1.86</ecNumber>
    </recommendedName>
    <alternativeName>
        <fullName evidence="1">Acetohydroxy-acid isomeroreductase</fullName>
        <shortName evidence="1">AHIR</shortName>
    </alternativeName>
    <alternativeName>
        <fullName evidence="1">Alpha-keto-beta-hydroxylacyl reductoisomerase</fullName>
    </alternativeName>
    <alternativeName>
        <fullName evidence="1">Ketol-acid reductoisomerase type 1</fullName>
    </alternativeName>
    <alternativeName>
        <fullName evidence="1">Ketol-acid reductoisomerase type I</fullName>
    </alternativeName>
</protein>
<evidence type="ECO:0000255" key="1">
    <source>
        <dbReference type="HAMAP-Rule" id="MF_00435"/>
    </source>
</evidence>
<evidence type="ECO:0000255" key="2">
    <source>
        <dbReference type="PROSITE-ProRule" id="PRU01197"/>
    </source>
</evidence>
<evidence type="ECO:0000255" key="3">
    <source>
        <dbReference type="PROSITE-ProRule" id="PRU01198"/>
    </source>
</evidence>
<organism>
    <name type="scientific">Chlorobium phaeobacteroides (strain BS1)</name>
    <dbReference type="NCBI Taxonomy" id="331678"/>
    <lineage>
        <taxon>Bacteria</taxon>
        <taxon>Pseudomonadati</taxon>
        <taxon>Chlorobiota</taxon>
        <taxon>Chlorobiia</taxon>
        <taxon>Chlorobiales</taxon>
        <taxon>Chlorobiaceae</taxon>
        <taxon>Chlorobium/Pelodictyon group</taxon>
        <taxon>Chlorobium</taxon>
    </lineage>
</organism>
<feature type="chain" id="PRO_1000190929" description="Ketol-acid reductoisomerase (NADP(+))">
    <location>
        <begin position="1"/>
        <end position="330"/>
    </location>
</feature>
<feature type="domain" description="KARI N-terminal Rossmann" evidence="2">
    <location>
        <begin position="1"/>
        <end position="181"/>
    </location>
</feature>
<feature type="domain" description="KARI C-terminal knotted" evidence="3">
    <location>
        <begin position="182"/>
        <end position="327"/>
    </location>
</feature>
<feature type="active site" evidence="1">
    <location>
        <position position="107"/>
    </location>
</feature>
<feature type="binding site" evidence="1">
    <location>
        <begin position="24"/>
        <end position="27"/>
    </location>
    <ligand>
        <name>NADP(+)</name>
        <dbReference type="ChEBI" id="CHEBI:58349"/>
    </ligand>
</feature>
<feature type="binding site" evidence="1">
    <location>
        <position position="47"/>
    </location>
    <ligand>
        <name>NADP(+)</name>
        <dbReference type="ChEBI" id="CHEBI:58349"/>
    </ligand>
</feature>
<feature type="binding site" evidence="1">
    <location>
        <position position="50"/>
    </location>
    <ligand>
        <name>NADP(+)</name>
        <dbReference type="ChEBI" id="CHEBI:58349"/>
    </ligand>
</feature>
<feature type="binding site" evidence="1">
    <location>
        <position position="52"/>
    </location>
    <ligand>
        <name>NADP(+)</name>
        <dbReference type="ChEBI" id="CHEBI:58349"/>
    </ligand>
</feature>
<feature type="binding site" evidence="1">
    <location>
        <begin position="82"/>
        <end position="85"/>
    </location>
    <ligand>
        <name>NADP(+)</name>
        <dbReference type="ChEBI" id="CHEBI:58349"/>
    </ligand>
</feature>
<feature type="binding site" evidence="1">
    <location>
        <position position="133"/>
    </location>
    <ligand>
        <name>NADP(+)</name>
        <dbReference type="ChEBI" id="CHEBI:58349"/>
    </ligand>
</feature>
<feature type="binding site" evidence="1">
    <location>
        <position position="190"/>
    </location>
    <ligand>
        <name>Mg(2+)</name>
        <dbReference type="ChEBI" id="CHEBI:18420"/>
        <label>1</label>
    </ligand>
</feature>
<feature type="binding site" evidence="1">
    <location>
        <position position="190"/>
    </location>
    <ligand>
        <name>Mg(2+)</name>
        <dbReference type="ChEBI" id="CHEBI:18420"/>
        <label>2</label>
    </ligand>
</feature>
<feature type="binding site" evidence="1">
    <location>
        <position position="194"/>
    </location>
    <ligand>
        <name>Mg(2+)</name>
        <dbReference type="ChEBI" id="CHEBI:18420"/>
        <label>1</label>
    </ligand>
</feature>
<feature type="binding site" evidence="1">
    <location>
        <position position="226"/>
    </location>
    <ligand>
        <name>Mg(2+)</name>
        <dbReference type="ChEBI" id="CHEBI:18420"/>
        <label>2</label>
    </ligand>
</feature>
<feature type="binding site" evidence="1">
    <location>
        <position position="230"/>
    </location>
    <ligand>
        <name>Mg(2+)</name>
        <dbReference type="ChEBI" id="CHEBI:18420"/>
        <label>2</label>
    </ligand>
</feature>
<feature type="binding site" evidence="1">
    <location>
        <position position="251"/>
    </location>
    <ligand>
        <name>substrate</name>
    </ligand>
</feature>
<accession>B3EKV1</accession>
<name>ILVC_CHLPB</name>
<keyword id="KW-0028">Amino-acid biosynthesis</keyword>
<keyword id="KW-0100">Branched-chain amino acid biosynthesis</keyword>
<keyword id="KW-0460">Magnesium</keyword>
<keyword id="KW-0479">Metal-binding</keyword>
<keyword id="KW-0521">NADP</keyword>
<keyword id="KW-0560">Oxidoreductase</keyword>
<reference key="1">
    <citation type="submission" date="2008-06" db="EMBL/GenBank/DDBJ databases">
        <title>Complete sequence of Chlorobium phaeobacteroides BS1.</title>
        <authorList>
            <consortium name="US DOE Joint Genome Institute"/>
            <person name="Lucas S."/>
            <person name="Copeland A."/>
            <person name="Lapidus A."/>
            <person name="Glavina del Rio T."/>
            <person name="Dalin E."/>
            <person name="Tice H."/>
            <person name="Bruce D."/>
            <person name="Goodwin L."/>
            <person name="Pitluck S."/>
            <person name="Schmutz J."/>
            <person name="Larimer F."/>
            <person name="Land M."/>
            <person name="Hauser L."/>
            <person name="Kyrpides N."/>
            <person name="Ovchinnikova G."/>
            <person name="Li T."/>
            <person name="Liu Z."/>
            <person name="Zhao F."/>
            <person name="Overmann J."/>
            <person name="Bryant D.A."/>
            <person name="Richardson P."/>
        </authorList>
    </citation>
    <scope>NUCLEOTIDE SEQUENCE [LARGE SCALE GENOMIC DNA]</scope>
    <source>
        <strain>BS1</strain>
    </source>
</reference>